<dbReference type="EC" id="4.2.3.-" evidence="3"/>
<dbReference type="EMBL" id="MG262469">
    <property type="protein sequence ID" value="AXN72977.1"/>
    <property type="molecule type" value="mRNA"/>
</dbReference>
<dbReference type="EMBL" id="GL871020">
    <property type="protein sequence ID" value="EGC36655.1"/>
    <property type="molecule type" value="Genomic_DNA"/>
</dbReference>
<dbReference type="RefSeq" id="XP_003286823.1">
    <property type="nucleotide sequence ID" value="XM_003286775.1"/>
</dbReference>
<dbReference type="SMR" id="F0ZHE2"/>
<dbReference type="STRING" id="5786.F0ZHE2"/>
<dbReference type="EnsemblProtists" id="EGC36655">
    <property type="protein sequence ID" value="EGC36655"/>
    <property type="gene ID" value="DICPUDRAFT_31532"/>
</dbReference>
<dbReference type="GeneID" id="10504217"/>
<dbReference type="KEGG" id="dpp:DICPUDRAFT_31532"/>
<dbReference type="VEuPathDB" id="AmoebaDB:DICPUDRAFT_31532"/>
<dbReference type="InParanoid" id="F0ZHE2"/>
<dbReference type="OrthoDB" id="2861623at2759"/>
<dbReference type="Proteomes" id="UP000001064">
    <property type="component" value="Unassembled WGS sequence"/>
</dbReference>
<dbReference type="GO" id="GO:0016829">
    <property type="term" value="F:lyase activity"/>
    <property type="evidence" value="ECO:0007669"/>
    <property type="project" value="UniProtKB-KW"/>
</dbReference>
<dbReference type="GO" id="GO:0046872">
    <property type="term" value="F:metal ion binding"/>
    <property type="evidence" value="ECO:0007669"/>
    <property type="project" value="UniProtKB-KW"/>
</dbReference>
<dbReference type="Gene3D" id="1.10.600.10">
    <property type="entry name" value="Farnesyl Diphosphate Synthase"/>
    <property type="match status" value="1"/>
</dbReference>
<dbReference type="InterPro" id="IPR008949">
    <property type="entry name" value="Isoprenoid_synthase_dom_sf"/>
</dbReference>
<dbReference type="Pfam" id="PF19086">
    <property type="entry name" value="Terpene_syn_C_2"/>
    <property type="match status" value="1"/>
</dbReference>
<dbReference type="SUPFAM" id="SSF48576">
    <property type="entry name" value="Terpenoid synthases"/>
    <property type="match status" value="1"/>
</dbReference>
<gene>
    <name evidence="4" type="primary">TPS8</name>
    <name type="ORF">DICPUDRAFT_31532</name>
</gene>
<protein>
    <recommendedName>
        <fullName evidence="4">Terpene synthase 8</fullName>
        <ecNumber evidence="3">4.2.3.-</ecNumber>
    </recommendedName>
</protein>
<comment type="function">
    <text evidence="3">Terpene synthase that converts its substrate farnesyl diphosphate (FPP) into several yet unidentified sesquiterpenes.</text>
</comment>
<comment type="domain">
    <text evidence="2">Contains several highly conserved motifs that are important for catalytic activity including the aspartate-rich 'DDxx(x)D/E' motif and the 'NDxxSxxxD/E' motif, both of which are involved in complexing metal ions to coordinate the binding of the isoprenyl diphosphate substrate in the active site.</text>
</comment>
<comment type="similarity">
    <text evidence="5">Belongs to the terpene synthase family.</text>
</comment>
<accession>F0ZHE2</accession>
<organism>
    <name type="scientific">Dictyostelium purpureum</name>
    <name type="common">Slime mold</name>
    <dbReference type="NCBI Taxonomy" id="5786"/>
    <lineage>
        <taxon>Eukaryota</taxon>
        <taxon>Amoebozoa</taxon>
        <taxon>Evosea</taxon>
        <taxon>Eumycetozoa</taxon>
        <taxon>Dictyostelia</taxon>
        <taxon>Dictyosteliales</taxon>
        <taxon>Dictyosteliaceae</taxon>
        <taxon>Dictyostelium</taxon>
    </lineage>
</organism>
<reference key="1">
    <citation type="journal article" date="2018" name="Sci. Rep.">
        <title>Diversity and Functional Evolution of Terpene Synthases in Dictyostelid Social Amoebae.</title>
        <authorList>
            <person name="Chen X."/>
            <person name="Kollner T.G."/>
            <person name="Shaulsky G."/>
            <person name="Jia Q."/>
            <person name="Dickschat J.S."/>
            <person name="Gershenzon J."/>
            <person name="Chen F."/>
        </authorList>
    </citation>
    <scope>NUCLEOTIDE SEQUENCE [MRNA]</scope>
    <scope>FUNCTION</scope>
    <scope>CATALYTIC ACTIVITY</scope>
    <source>
        <strain>AX1</strain>
    </source>
</reference>
<reference key="2">
    <citation type="journal article" date="2011" name="Genome Biol.">
        <title>Comparative genomics of the social amoebae Dictyostelium discoideum and Dictyostelium purpureum.</title>
        <authorList>
            <consortium name="US DOE Joint Genome Institute (JGI-PGF)"/>
            <person name="Sucgang R."/>
            <person name="Kuo A."/>
            <person name="Tian X."/>
            <person name="Salerno W."/>
            <person name="Parikh A."/>
            <person name="Feasley C.L."/>
            <person name="Dalin E."/>
            <person name="Tu H."/>
            <person name="Huang E."/>
            <person name="Barry K."/>
            <person name="Lindquist E."/>
            <person name="Shapiro H."/>
            <person name="Bruce D."/>
            <person name="Schmutz J."/>
            <person name="Salamov A."/>
            <person name="Fey P."/>
            <person name="Gaudet P."/>
            <person name="Anjard C."/>
            <person name="Babu M.M."/>
            <person name="Basu S."/>
            <person name="Bushmanova Y."/>
            <person name="van der Wel H."/>
            <person name="Katoh-Kurasawa M."/>
            <person name="Dinh C."/>
            <person name="Coutinho P.M."/>
            <person name="Saito T."/>
            <person name="Elias M."/>
            <person name="Schaap P."/>
            <person name="Kay R.R."/>
            <person name="Henrissat B."/>
            <person name="Eichinger L."/>
            <person name="Rivero F."/>
            <person name="Putnam N.H."/>
            <person name="West C.M."/>
            <person name="Loomis W.F."/>
            <person name="Chisholm R.L."/>
            <person name="Shaulsky G."/>
            <person name="Strassmann J.E."/>
            <person name="Queller D.C."/>
            <person name="Kuspa A."/>
            <person name="Grigoriev I.V."/>
        </authorList>
    </citation>
    <scope>NUCLEOTIDE SEQUENCE [LARGE SCALE GENOMIC DNA]</scope>
    <source>
        <strain>QSDP1</strain>
    </source>
</reference>
<sequence length="331" mass="39480">MQEEILYKWNYDDFKDKKFKIPKLNMPWDYKFSPYFEEISLENREWIKGTKLISEESDFEKFVYLKTILMNSYLYPHCNKEVFRYINRLNEYIYIVDDFYLEDNVKGQEWVDELFDRNSKFVKENYIGSIMWEIFDDIISVGNDGATDYLIKKTHEWMDSVILFNSKKVNSKFTFEEYTNSRGVDVGMIFGLACTKVHIPPLCDEIENHPVYIDMLANYYNPIHLLINDIYSFNKETKSVRLGNYVKIAAYQLGSIQLAMDHLSKLFDEYIGKIQEKFAELEKIFPNNKDLETHLYIIKTIIACNFNCSTNPNYPRYYGEVLEAELKIINE</sequence>
<evidence type="ECO:0000250" key="1">
    <source>
        <dbReference type="UniProtKB" id="Q54BE5"/>
    </source>
</evidence>
<evidence type="ECO:0000250" key="2">
    <source>
        <dbReference type="UniProtKB" id="Q55E23"/>
    </source>
</evidence>
<evidence type="ECO:0000269" key="3">
    <source>
    </source>
</evidence>
<evidence type="ECO:0000303" key="4">
    <source>
    </source>
</evidence>
<evidence type="ECO:0000305" key="5"/>
<name>TPS8_DICPU</name>
<feature type="chain" id="PRO_0000457025" description="Terpene synthase 8">
    <location>
        <begin position="1"/>
        <end position="331"/>
    </location>
</feature>
<feature type="short sequence motif" description="DDxx(x)D/E motif" evidence="1">
    <location>
        <begin position="97"/>
        <end position="102"/>
    </location>
</feature>
<feature type="short sequence motif" description="NDxxSxxxD/E motif" evidence="1">
    <location>
        <begin position="228"/>
        <end position="236"/>
    </location>
</feature>
<keyword id="KW-0456">Lyase</keyword>
<keyword id="KW-0479">Metal-binding</keyword>
<keyword id="KW-1185">Reference proteome</keyword>
<proteinExistence type="evidence at protein level"/>